<accession>B2JJX8</accession>
<sequence>MEQFHGTTIVSVRRGDKVALGGDGQVTLGNIVMKGGAKKVRRIYNNKVLVGFAGGTADAFSLLDRFEAKLEKHQGNLTRAAVELAKDWRTDRMLRRLEAMLITADATTTLVITGNGDVLDPEGGICAIGSGGAYAQAAAKALADNTDLSPREIVEKSLEIAGDMCIYTNHNRVIETIE</sequence>
<organism>
    <name type="scientific">Paraburkholderia phymatum (strain DSM 17167 / CIP 108236 / LMG 21445 / STM815)</name>
    <name type="common">Burkholderia phymatum</name>
    <dbReference type="NCBI Taxonomy" id="391038"/>
    <lineage>
        <taxon>Bacteria</taxon>
        <taxon>Pseudomonadati</taxon>
        <taxon>Pseudomonadota</taxon>
        <taxon>Betaproteobacteria</taxon>
        <taxon>Burkholderiales</taxon>
        <taxon>Burkholderiaceae</taxon>
        <taxon>Paraburkholderia</taxon>
    </lineage>
</organism>
<evidence type="ECO:0000255" key="1">
    <source>
        <dbReference type="HAMAP-Rule" id="MF_00248"/>
    </source>
</evidence>
<reference key="1">
    <citation type="journal article" date="2014" name="Stand. Genomic Sci.">
        <title>Complete genome sequence of Burkholderia phymatum STM815(T), a broad host range and efficient nitrogen-fixing symbiont of Mimosa species.</title>
        <authorList>
            <person name="Moulin L."/>
            <person name="Klonowska A."/>
            <person name="Caroline B."/>
            <person name="Booth K."/>
            <person name="Vriezen J.A."/>
            <person name="Melkonian R."/>
            <person name="James E.K."/>
            <person name="Young J.P."/>
            <person name="Bena G."/>
            <person name="Hauser L."/>
            <person name="Land M."/>
            <person name="Kyrpides N."/>
            <person name="Bruce D."/>
            <person name="Chain P."/>
            <person name="Copeland A."/>
            <person name="Pitluck S."/>
            <person name="Woyke T."/>
            <person name="Lizotte-Waniewski M."/>
            <person name="Bristow J."/>
            <person name="Riley M."/>
        </authorList>
    </citation>
    <scope>NUCLEOTIDE SEQUENCE [LARGE SCALE GENOMIC DNA]</scope>
    <source>
        <strain>DSM 17167 / CIP 108236 / LMG 21445 / STM815</strain>
    </source>
</reference>
<proteinExistence type="inferred from homology"/>
<gene>
    <name evidence="1" type="primary">hslV</name>
    <name type="ordered locus">Bphy_0070</name>
</gene>
<dbReference type="EC" id="3.4.25.2" evidence="1"/>
<dbReference type="EMBL" id="CP001043">
    <property type="protein sequence ID" value="ACC69265.1"/>
    <property type="molecule type" value="Genomic_DNA"/>
</dbReference>
<dbReference type="RefSeq" id="WP_012399495.1">
    <property type="nucleotide sequence ID" value="NC_010622.1"/>
</dbReference>
<dbReference type="SMR" id="B2JJX8"/>
<dbReference type="STRING" id="391038.Bphy_0070"/>
<dbReference type="MEROPS" id="T01.006"/>
<dbReference type="KEGG" id="bph:Bphy_0070"/>
<dbReference type="eggNOG" id="COG5405">
    <property type="taxonomic scope" value="Bacteria"/>
</dbReference>
<dbReference type="HOGENOM" id="CLU_093872_1_0_4"/>
<dbReference type="OrthoDB" id="9804884at2"/>
<dbReference type="Proteomes" id="UP000001192">
    <property type="component" value="Chromosome 1"/>
</dbReference>
<dbReference type="GO" id="GO:0009376">
    <property type="term" value="C:HslUV protease complex"/>
    <property type="evidence" value="ECO:0007669"/>
    <property type="project" value="UniProtKB-UniRule"/>
</dbReference>
<dbReference type="GO" id="GO:0005839">
    <property type="term" value="C:proteasome core complex"/>
    <property type="evidence" value="ECO:0007669"/>
    <property type="project" value="InterPro"/>
</dbReference>
<dbReference type="GO" id="GO:0046872">
    <property type="term" value="F:metal ion binding"/>
    <property type="evidence" value="ECO:0007669"/>
    <property type="project" value="UniProtKB-KW"/>
</dbReference>
<dbReference type="GO" id="GO:0004298">
    <property type="term" value="F:threonine-type endopeptidase activity"/>
    <property type="evidence" value="ECO:0007669"/>
    <property type="project" value="UniProtKB-KW"/>
</dbReference>
<dbReference type="GO" id="GO:0051603">
    <property type="term" value="P:proteolysis involved in protein catabolic process"/>
    <property type="evidence" value="ECO:0007669"/>
    <property type="project" value="InterPro"/>
</dbReference>
<dbReference type="CDD" id="cd01913">
    <property type="entry name" value="protease_HslV"/>
    <property type="match status" value="1"/>
</dbReference>
<dbReference type="FunFam" id="3.60.20.10:FF:000002">
    <property type="entry name" value="ATP-dependent protease subunit HslV"/>
    <property type="match status" value="1"/>
</dbReference>
<dbReference type="Gene3D" id="3.60.20.10">
    <property type="entry name" value="Glutamine Phosphoribosylpyrophosphate, subunit 1, domain 1"/>
    <property type="match status" value="1"/>
</dbReference>
<dbReference type="HAMAP" id="MF_00248">
    <property type="entry name" value="HslV"/>
    <property type="match status" value="1"/>
</dbReference>
<dbReference type="InterPro" id="IPR022281">
    <property type="entry name" value="ATP-dep_Prtase_HsIV_su"/>
</dbReference>
<dbReference type="InterPro" id="IPR029055">
    <property type="entry name" value="Ntn_hydrolases_N"/>
</dbReference>
<dbReference type="InterPro" id="IPR001353">
    <property type="entry name" value="Proteasome_sua/b"/>
</dbReference>
<dbReference type="InterPro" id="IPR023333">
    <property type="entry name" value="Proteasome_suB-type"/>
</dbReference>
<dbReference type="NCBIfam" id="TIGR03692">
    <property type="entry name" value="ATP_dep_HslV"/>
    <property type="match status" value="1"/>
</dbReference>
<dbReference type="NCBIfam" id="NF003964">
    <property type="entry name" value="PRK05456.1"/>
    <property type="match status" value="1"/>
</dbReference>
<dbReference type="PANTHER" id="PTHR32194:SF0">
    <property type="entry name" value="ATP-DEPENDENT PROTEASE SUBUNIT HSLV"/>
    <property type="match status" value="1"/>
</dbReference>
<dbReference type="PANTHER" id="PTHR32194">
    <property type="entry name" value="METALLOPROTEASE TLDD"/>
    <property type="match status" value="1"/>
</dbReference>
<dbReference type="Pfam" id="PF00227">
    <property type="entry name" value="Proteasome"/>
    <property type="match status" value="1"/>
</dbReference>
<dbReference type="PIRSF" id="PIRSF039093">
    <property type="entry name" value="HslV"/>
    <property type="match status" value="1"/>
</dbReference>
<dbReference type="SUPFAM" id="SSF56235">
    <property type="entry name" value="N-terminal nucleophile aminohydrolases (Ntn hydrolases)"/>
    <property type="match status" value="1"/>
</dbReference>
<dbReference type="PROSITE" id="PS51476">
    <property type="entry name" value="PROTEASOME_BETA_2"/>
    <property type="match status" value="1"/>
</dbReference>
<comment type="function">
    <text evidence="1">Protease subunit of a proteasome-like degradation complex believed to be a general protein degrading machinery.</text>
</comment>
<comment type="catalytic activity">
    <reaction evidence="1">
        <text>ATP-dependent cleavage of peptide bonds with broad specificity.</text>
        <dbReference type="EC" id="3.4.25.2"/>
    </reaction>
</comment>
<comment type="activity regulation">
    <text evidence="1">Allosterically activated by HslU binding.</text>
</comment>
<comment type="subunit">
    <text evidence="1">A double ring-shaped homohexamer of HslV is capped on each side by a ring-shaped HslU homohexamer. The assembly of the HslU/HslV complex is dependent on binding of ATP.</text>
</comment>
<comment type="subcellular location">
    <subcellularLocation>
        <location evidence="1">Cytoplasm</location>
    </subcellularLocation>
</comment>
<comment type="similarity">
    <text evidence="1">Belongs to the peptidase T1B family. HslV subfamily.</text>
</comment>
<name>HSLV_PARP8</name>
<feature type="chain" id="PRO_1000100881" description="ATP-dependent protease subunit HslV">
    <location>
        <begin position="1"/>
        <end position="178"/>
    </location>
</feature>
<feature type="active site" evidence="1">
    <location>
        <position position="7"/>
    </location>
</feature>
<feature type="binding site" evidence="1">
    <location>
        <position position="162"/>
    </location>
    <ligand>
        <name>Na(+)</name>
        <dbReference type="ChEBI" id="CHEBI:29101"/>
    </ligand>
</feature>
<feature type="binding site" evidence="1">
    <location>
        <position position="165"/>
    </location>
    <ligand>
        <name>Na(+)</name>
        <dbReference type="ChEBI" id="CHEBI:29101"/>
    </ligand>
</feature>
<feature type="binding site" evidence="1">
    <location>
        <position position="168"/>
    </location>
    <ligand>
        <name>Na(+)</name>
        <dbReference type="ChEBI" id="CHEBI:29101"/>
    </ligand>
</feature>
<keyword id="KW-0021">Allosteric enzyme</keyword>
<keyword id="KW-0963">Cytoplasm</keyword>
<keyword id="KW-0378">Hydrolase</keyword>
<keyword id="KW-0479">Metal-binding</keyword>
<keyword id="KW-0645">Protease</keyword>
<keyword id="KW-1185">Reference proteome</keyword>
<keyword id="KW-0915">Sodium</keyword>
<keyword id="KW-0888">Threonine protease</keyword>
<protein>
    <recommendedName>
        <fullName evidence="1">ATP-dependent protease subunit HslV</fullName>
        <ecNumber evidence="1">3.4.25.2</ecNumber>
    </recommendedName>
</protein>